<accession>Q5JFR5</accession>
<keyword id="KW-0028">Amino-acid biosynthesis</keyword>
<keyword id="KW-0368">Histidine biosynthesis</keyword>
<keyword id="KW-0479">Metal-binding</keyword>
<keyword id="KW-0520">NAD</keyword>
<keyword id="KW-0560">Oxidoreductase</keyword>
<keyword id="KW-1185">Reference proteome</keyword>
<keyword id="KW-0862">Zinc</keyword>
<sequence length="376" mass="42216">MKGLEEYVREILEDIRRRGLEALREYSERFDNYSGPFRVSEGEFEEAEELVPEEDKRVIEETMERLWEYHARQFRDVELYIKRGSLYGLIYRPIGRIGIYVPGGKPLPSTLMMVGIPARIAGVREIAVTTPPKDGKVNPYVLYVAKLLGIEEVYKLGGVGAIAAMAYGVGMRRVDKIFGPGNRFVNEAKRQVFGIVGIDSLAGPSEIAVIADESADKDYVLADLLSQLEHGKDSKAWLLTTSRELADYCSREGIEVLLCRNLEECAEKANEIAPEHLEIITENPEELVDLIENAGAIYLGPYTPVPAADYFLGVNHVLPTGGAARFSGVLTVMDFMKPITLARVSREEFLAYRRLGMRLAEIEGMEAHRRSLEVRR</sequence>
<reference key="1">
    <citation type="journal article" date="2005" name="Genome Res.">
        <title>Complete genome sequence of the hyperthermophilic archaeon Thermococcus kodakaraensis KOD1 and comparison with Pyrococcus genomes.</title>
        <authorList>
            <person name="Fukui T."/>
            <person name="Atomi H."/>
            <person name="Kanai T."/>
            <person name="Matsumi R."/>
            <person name="Fujiwara S."/>
            <person name="Imanaka T."/>
        </authorList>
    </citation>
    <scope>NUCLEOTIDE SEQUENCE [LARGE SCALE GENOMIC DNA]</scope>
    <source>
        <strain>ATCC BAA-918 / JCM 12380 / KOD1</strain>
    </source>
</reference>
<gene>
    <name evidence="1" type="primary">hisD</name>
    <name type="ordered locus">TK0244</name>
</gene>
<feature type="chain" id="PRO_0000135904" description="Histidinol dehydrogenase">
    <location>
        <begin position="1"/>
        <end position="376"/>
    </location>
</feature>
<feature type="active site" description="Proton acceptor" evidence="1">
    <location>
        <position position="275"/>
    </location>
</feature>
<feature type="active site" description="Proton acceptor" evidence="1">
    <location>
        <position position="276"/>
    </location>
</feature>
<feature type="binding site" evidence="1">
    <location>
        <position position="100"/>
    </location>
    <ligand>
        <name>NAD(+)</name>
        <dbReference type="ChEBI" id="CHEBI:57540"/>
    </ligand>
</feature>
<feature type="binding site" evidence="1">
    <location>
        <position position="182"/>
    </location>
    <ligand>
        <name>NAD(+)</name>
        <dbReference type="ChEBI" id="CHEBI:57540"/>
    </ligand>
</feature>
<feature type="binding site" evidence="1">
    <location>
        <position position="205"/>
    </location>
    <ligand>
        <name>substrate</name>
    </ligand>
</feature>
<feature type="binding site" evidence="1">
    <location>
        <position position="227"/>
    </location>
    <ligand>
        <name>substrate</name>
    </ligand>
</feature>
<feature type="binding site" evidence="1">
    <location>
        <position position="227"/>
    </location>
    <ligand>
        <name>Zn(2+)</name>
        <dbReference type="ChEBI" id="CHEBI:29105"/>
    </ligand>
</feature>
<feature type="binding site" evidence="1">
    <location>
        <position position="230"/>
    </location>
    <ligand>
        <name>substrate</name>
    </ligand>
</feature>
<feature type="binding site" evidence="1">
    <location>
        <position position="230"/>
    </location>
    <ligand>
        <name>Zn(2+)</name>
        <dbReference type="ChEBI" id="CHEBI:29105"/>
    </ligand>
</feature>
<feature type="binding site" evidence="1">
    <location>
        <position position="276"/>
    </location>
    <ligand>
        <name>substrate</name>
    </ligand>
</feature>
<feature type="binding site" evidence="1">
    <location>
        <position position="309"/>
    </location>
    <ligand>
        <name>substrate</name>
    </ligand>
</feature>
<feature type="binding site" evidence="1">
    <location>
        <position position="309"/>
    </location>
    <ligand>
        <name>Zn(2+)</name>
        <dbReference type="ChEBI" id="CHEBI:29105"/>
    </ligand>
</feature>
<feature type="binding site" evidence="1">
    <location>
        <position position="363"/>
    </location>
    <ligand>
        <name>substrate</name>
    </ligand>
</feature>
<feature type="binding site" evidence="1">
    <location>
        <position position="368"/>
    </location>
    <ligand>
        <name>substrate</name>
    </ligand>
</feature>
<feature type="binding site" evidence="1">
    <location>
        <position position="368"/>
    </location>
    <ligand>
        <name>Zn(2+)</name>
        <dbReference type="ChEBI" id="CHEBI:29105"/>
    </ligand>
</feature>
<name>HISX_THEKO</name>
<protein>
    <recommendedName>
        <fullName evidence="1">Histidinol dehydrogenase</fullName>
        <shortName evidence="1">HDH</shortName>
        <ecNumber evidence="1">1.1.1.23</ecNumber>
    </recommendedName>
</protein>
<dbReference type="EC" id="1.1.1.23" evidence="1"/>
<dbReference type="EMBL" id="AP006878">
    <property type="protein sequence ID" value="BAD84433.1"/>
    <property type="molecule type" value="Genomic_DNA"/>
</dbReference>
<dbReference type="RefSeq" id="WP_011249199.1">
    <property type="nucleotide sequence ID" value="NC_006624.1"/>
</dbReference>
<dbReference type="SMR" id="Q5JFR5"/>
<dbReference type="FunCoup" id="Q5JFR5">
    <property type="interactions" value="177"/>
</dbReference>
<dbReference type="STRING" id="69014.TK0244"/>
<dbReference type="EnsemblBacteria" id="BAD84433">
    <property type="protein sequence ID" value="BAD84433"/>
    <property type="gene ID" value="TK0244"/>
</dbReference>
<dbReference type="GeneID" id="78446748"/>
<dbReference type="KEGG" id="tko:TK0244"/>
<dbReference type="PATRIC" id="fig|69014.16.peg.243"/>
<dbReference type="eggNOG" id="arCOG04352">
    <property type="taxonomic scope" value="Archaea"/>
</dbReference>
<dbReference type="HOGENOM" id="CLU_006732_3_3_2"/>
<dbReference type="InParanoid" id="Q5JFR5"/>
<dbReference type="OrthoDB" id="36308at2157"/>
<dbReference type="PhylomeDB" id="Q5JFR5"/>
<dbReference type="UniPathway" id="UPA00031">
    <property type="reaction ID" value="UER00014"/>
</dbReference>
<dbReference type="Proteomes" id="UP000000536">
    <property type="component" value="Chromosome"/>
</dbReference>
<dbReference type="GO" id="GO:0005737">
    <property type="term" value="C:cytoplasm"/>
    <property type="evidence" value="ECO:0000318"/>
    <property type="project" value="GO_Central"/>
</dbReference>
<dbReference type="GO" id="GO:0004399">
    <property type="term" value="F:histidinol dehydrogenase activity"/>
    <property type="evidence" value="ECO:0000318"/>
    <property type="project" value="GO_Central"/>
</dbReference>
<dbReference type="GO" id="GO:0051287">
    <property type="term" value="F:NAD binding"/>
    <property type="evidence" value="ECO:0007669"/>
    <property type="project" value="InterPro"/>
</dbReference>
<dbReference type="GO" id="GO:0008270">
    <property type="term" value="F:zinc ion binding"/>
    <property type="evidence" value="ECO:0007669"/>
    <property type="project" value="UniProtKB-UniRule"/>
</dbReference>
<dbReference type="GO" id="GO:0000105">
    <property type="term" value="P:L-histidine biosynthetic process"/>
    <property type="evidence" value="ECO:0000318"/>
    <property type="project" value="GO_Central"/>
</dbReference>
<dbReference type="CDD" id="cd06572">
    <property type="entry name" value="Histidinol_dh"/>
    <property type="match status" value="1"/>
</dbReference>
<dbReference type="FunFam" id="3.40.50.1980:FF:000050">
    <property type="entry name" value="Histidine biosynthesis trifunctional protein"/>
    <property type="match status" value="1"/>
</dbReference>
<dbReference type="Gene3D" id="1.20.5.1300">
    <property type="match status" value="1"/>
</dbReference>
<dbReference type="Gene3D" id="3.40.50.1980">
    <property type="entry name" value="Nitrogenase molybdenum iron protein domain"/>
    <property type="match status" value="2"/>
</dbReference>
<dbReference type="HAMAP" id="MF_01024">
    <property type="entry name" value="HisD"/>
    <property type="match status" value="1"/>
</dbReference>
<dbReference type="InterPro" id="IPR016161">
    <property type="entry name" value="Ald_DH/histidinol_DH"/>
</dbReference>
<dbReference type="InterPro" id="IPR001692">
    <property type="entry name" value="Histidinol_DH_CS"/>
</dbReference>
<dbReference type="InterPro" id="IPR012131">
    <property type="entry name" value="Hstdl_DH"/>
</dbReference>
<dbReference type="NCBIfam" id="TIGR00069">
    <property type="entry name" value="hisD"/>
    <property type="match status" value="1"/>
</dbReference>
<dbReference type="PANTHER" id="PTHR21256:SF2">
    <property type="entry name" value="HISTIDINE BIOSYNTHESIS TRIFUNCTIONAL PROTEIN"/>
    <property type="match status" value="1"/>
</dbReference>
<dbReference type="PANTHER" id="PTHR21256">
    <property type="entry name" value="HISTIDINOL DEHYDROGENASE HDH"/>
    <property type="match status" value="1"/>
</dbReference>
<dbReference type="Pfam" id="PF00815">
    <property type="entry name" value="Histidinol_dh"/>
    <property type="match status" value="2"/>
</dbReference>
<dbReference type="PRINTS" id="PR00083">
    <property type="entry name" value="HOLDHDRGNASE"/>
</dbReference>
<dbReference type="SUPFAM" id="SSF53720">
    <property type="entry name" value="ALDH-like"/>
    <property type="match status" value="1"/>
</dbReference>
<dbReference type="PROSITE" id="PS00611">
    <property type="entry name" value="HISOL_DEHYDROGENASE"/>
    <property type="match status" value="1"/>
</dbReference>
<evidence type="ECO:0000255" key="1">
    <source>
        <dbReference type="HAMAP-Rule" id="MF_01024"/>
    </source>
</evidence>
<organism>
    <name type="scientific">Thermococcus kodakarensis (strain ATCC BAA-918 / JCM 12380 / KOD1)</name>
    <name type="common">Pyrococcus kodakaraensis (strain KOD1)</name>
    <dbReference type="NCBI Taxonomy" id="69014"/>
    <lineage>
        <taxon>Archaea</taxon>
        <taxon>Methanobacteriati</taxon>
        <taxon>Methanobacteriota</taxon>
        <taxon>Thermococci</taxon>
        <taxon>Thermococcales</taxon>
        <taxon>Thermococcaceae</taxon>
        <taxon>Thermococcus</taxon>
    </lineage>
</organism>
<comment type="function">
    <text evidence="1">Catalyzes the sequential NAD-dependent oxidations of L-histidinol to L-histidinaldehyde and then to L-histidine.</text>
</comment>
<comment type="catalytic activity">
    <reaction evidence="1">
        <text>L-histidinol + 2 NAD(+) + H2O = L-histidine + 2 NADH + 3 H(+)</text>
        <dbReference type="Rhea" id="RHEA:20641"/>
        <dbReference type="ChEBI" id="CHEBI:15377"/>
        <dbReference type="ChEBI" id="CHEBI:15378"/>
        <dbReference type="ChEBI" id="CHEBI:57540"/>
        <dbReference type="ChEBI" id="CHEBI:57595"/>
        <dbReference type="ChEBI" id="CHEBI:57699"/>
        <dbReference type="ChEBI" id="CHEBI:57945"/>
        <dbReference type="EC" id="1.1.1.23"/>
    </reaction>
</comment>
<comment type="cofactor">
    <cofactor evidence="1">
        <name>Zn(2+)</name>
        <dbReference type="ChEBI" id="CHEBI:29105"/>
    </cofactor>
    <text evidence="1">Binds 1 zinc ion per subunit.</text>
</comment>
<comment type="pathway">
    <text evidence="1">Amino-acid biosynthesis; L-histidine biosynthesis; L-histidine from 5-phospho-alpha-D-ribose 1-diphosphate: step 9/9.</text>
</comment>
<comment type="similarity">
    <text evidence="1">Belongs to the histidinol dehydrogenase family.</text>
</comment>
<proteinExistence type="inferred from homology"/>